<feature type="chain" id="PRO_0000098665" description="5-methyltetrahydropteroyltriglutamate--homocysteine methyltransferase">
    <location>
        <begin position="1"/>
        <end position="748"/>
    </location>
</feature>
<feature type="active site" description="Proton donor" evidence="1">
    <location>
        <position position="683"/>
    </location>
</feature>
<feature type="binding site" evidence="1">
    <location>
        <begin position="18"/>
        <end position="21"/>
    </location>
    <ligand>
        <name>5-methyltetrahydropteroyltri-L-glutamate</name>
        <dbReference type="ChEBI" id="CHEBI:58207"/>
    </ligand>
</feature>
<feature type="binding site" evidence="1">
    <location>
        <position position="112"/>
    </location>
    <ligand>
        <name>5-methyltetrahydropteroyltri-L-glutamate</name>
        <dbReference type="ChEBI" id="CHEBI:58207"/>
    </ligand>
</feature>
<feature type="binding site" evidence="1">
    <location>
        <begin position="420"/>
        <end position="422"/>
    </location>
    <ligand>
        <name>L-homocysteine</name>
        <dbReference type="ChEBI" id="CHEBI:58199"/>
    </ligand>
</feature>
<feature type="binding site" evidence="1">
    <location>
        <begin position="420"/>
        <end position="422"/>
    </location>
    <ligand>
        <name>L-methionine</name>
        <dbReference type="ChEBI" id="CHEBI:57844"/>
    </ligand>
</feature>
<feature type="binding site" evidence="1">
    <location>
        <position position="473"/>
    </location>
    <ligand>
        <name>L-homocysteine</name>
        <dbReference type="ChEBI" id="CHEBI:58199"/>
    </ligand>
</feature>
<feature type="binding site" evidence="1">
    <location>
        <position position="473"/>
    </location>
    <ligand>
        <name>L-methionine</name>
        <dbReference type="ChEBI" id="CHEBI:57844"/>
    </ligand>
</feature>
<feature type="binding site" evidence="1">
    <location>
        <position position="550"/>
    </location>
    <ligand>
        <name>5-methyltetrahydropteroyltri-L-glutamate</name>
        <dbReference type="ChEBI" id="CHEBI:58207"/>
    </ligand>
</feature>
<feature type="binding site" evidence="1">
    <location>
        <position position="588"/>
    </location>
    <ligand>
        <name>L-homocysteine</name>
        <dbReference type="ChEBI" id="CHEBI:58199"/>
    </ligand>
</feature>
<feature type="binding site" evidence="1">
    <location>
        <position position="588"/>
    </location>
    <ligand>
        <name>L-methionine</name>
        <dbReference type="ChEBI" id="CHEBI:57844"/>
    </ligand>
</feature>
<feature type="binding site" evidence="1">
    <location>
        <position position="594"/>
    </location>
    <ligand>
        <name>5-methyltetrahydropteroyltri-L-glutamate</name>
        <dbReference type="ChEBI" id="CHEBI:58207"/>
    </ligand>
</feature>
<feature type="binding site" evidence="1">
    <location>
        <position position="630"/>
    </location>
    <ligand>
        <name>Zn(2+)</name>
        <dbReference type="ChEBI" id="CHEBI:29105"/>
        <note>catalytic</note>
    </ligand>
</feature>
<feature type="binding site" evidence="1">
    <location>
        <position position="632"/>
    </location>
    <ligand>
        <name>Zn(2+)</name>
        <dbReference type="ChEBI" id="CHEBI:29105"/>
        <note>catalytic</note>
    </ligand>
</feature>
<feature type="binding site" evidence="1">
    <location>
        <position position="654"/>
    </location>
    <ligand>
        <name>Zn(2+)</name>
        <dbReference type="ChEBI" id="CHEBI:29105"/>
        <note>catalytic</note>
    </ligand>
</feature>
<feature type="binding site" evidence="1">
    <location>
        <position position="715"/>
    </location>
    <ligand>
        <name>Zn(2+)</name>
        <dbReference type="ChEBI" id="CHEBI:29105"/>
        <note>catalytic</note>
    </ligand>
</feature>
<gene>
    <name evidence="1" type="primary">metE</name>
    <name type="ordered locus">SERP0034</name>
</gene>
<sequence length="748" mass="85943">MTTIKTSNLGFPRLGRKREWKKAIENYWAHKIDKAELDQTLTDLHKENLLLQKNYHLDSIPVGDFSLYDHILDTSLLFNIIPERFQGREVNDDLLFDIARGNKEHVASALIKWFNTNYHYIVPEWDNVEPKVEKNTLLERFKYAQSINVNAHPVIVGPITFVKLSKGGHQSFEEKVETLLPLYKEVLQSLVDAGAEYIQIDEPILVTDDSESYEDITRKAYDYFANEGLGKYLVIQTYFERVHLKFLSSLPVGGLGLDLVHDNGYNLKQIEDGDFDQSKALYAGIIDGRNVWAADIEAKKQLIETLQQHTQQLVIQPSSSLLHVPVSLDDETLDESIAEGLSFATEKLDELDALRRLFNDNDLSKYEHYKARYERFQSQSFKNLEYDFESVPTHRKSPFAKRKQLQNQRLNLPDLPTTTIGSFPQTREIRKFRADWKNNRITDAEYQEFLQNEIARWIKIQEDIGLDVLVHGEFERNDMVEFFGEKLQGFLVTKFGWVQSYGSRAVKPPVIYGDVKWTAPLTVKETVYAQSLTDKPVKGMLTGPVTILNWSFERVDVPRKVVQDQIALAIDEEVLALEEAGIKVIQVDEPALREGLPLRSEYHEQYLEDAVHSFKLATSSVHDETQIHTHMCYSQFGQIIHAIHDLDADVISIETSRSHGDLIQDFEDINYDLGIGLGVYDIHSPRIPTEEEITTAINRSLQQIDRSLFWVNPDCGLKTRKENEVKDALTVLVNAVKKKRQESESTTA</sequence>
<organism>
    <name type="scientific">Staphylococcus epidermidis (strain ATCC 35984 / DSM 28319 / BCRC 17069 / CCUG 31568 / BM 3577 / RP62A)</name>
    <dbReference type="NCBI Taxonomy" id="176279"/>
    <lineage>
        <taxon>Bacteria</taxon>
        <taxon>Bacillati</taxon>
        <taxon>Bacillota</taxon>
        <taxon>Bacilli</taxon>
        <taxon>Bacillales</taxon>
        <taxon>Staphylococcaceae</taxon>
        <taxon>Staphylococcus</taxon>
    </lineage>
</organism>
<reference key="1">
    <citation type="journal article" date="2005" name="J. Bacteriol.">
        <title>Insights on evolution of virulence and resistance from the complete genome analysis of an early methicillin-resistant Staphylococcus aureus strain and a biofilm-producing methicillin-resistant Staphylococcus epidermidis strain.</title>
        <authorList>
            <person name="Gill S.R."/>
            <person name="Fouts D.E."/>
            <person name="Archer G.L."/>
            <person name="Mongodin E.F."/>
            <person name="DeBoy R.T."/>
            <person name="Ravel J."/>
            <person name="Paulsen I.T."/>
            <person name="Kolonay J.F."/>
            <person name="Brinkac L.M."/>
            <person name="Beanan M.J."/>
            <person name="Dodson R.J."/>
            <person name="Daugherty S.C."/>
            <person name="Madupu R."/>
            <person name="Angiuoli S.V."/>
            <person name="Durkin A.S."/>
            <person name="Haft D.H."/>
            <person name="Vamathevan J.J."/>
            <person name="Khouri H."/>
            <person name="Utterback T.R."/>
            <person name="Lee C."/>
            <person name="Dimitrov G."/>
            <person name="Jiang L."/>
            <person name="Qin H."/>
            <person name="Weidman J."/>
            <person name="Tran K."/>
            <person name="Kang K.H."/>
            <person name="Hance I.R."/>
            <person name="Nelson K.E."/>
            <person name="Fraser C.M."/>
        </authorList>
    </citation>
    <scope>NUCLEOTIDE SEQUENCE [LARGE SCALE GENOMIC DNA]</scope>
    <source>
        <strain>ATCC 35984 / DSM 28319 / BCRC 17069 / CCUG 31568 / BM 3577 / RP62A</strain>
    </source>
</reference>
<comment type="function">
    <text evidence="1">Catalyzes the transfer of a methyl group from 5-methyltetrahydrofolate to homocysteine resulting in methionine formation.</text>
</comment>
<comment type="catalytic activity">
    <reaction evidence="1">
        <text>5-methyltetrahydropteroyltri-L-glutamate + L-homocysteine = tetrahydropteroyltri-L-glutamate + L-methionine</text>
        <dbReference type="Rhea" id="RHEA:21196"/>
        <dbReference type="ChEBI" id="CHEBI:57844"/>
        <dbReference type="ChEBI" id="CHEBI:58140"/>
        <dbReference type="ChEBI" id="CHEBI:58199"/>
        <dbReference type="ChEBI" id="CHEBI:58207"/>
        <dbReference type="EC" id="2.1.1.14"/>
    </reaction>
</comment>
<comment type="cofactor">
    <cofactor evidence="1">
        <name>Zn(2+)</name>
        <dbReference type="ChEBI" id="CHEBI:29105"/>
    </cofactor>
    <text evidence="1">Binds 1 zinc ion per subunit.</text>
</comment>
<comment type="pathway">
    <text evidence="1">Amino-acid biosynthesis; L-methionine biosynthesis via de novo pathway; L-methionine from L-homocysteine (MetE route): step 1/1.</text>
</comment>
<comment type="similarity">
    <text evidence="1">Belongs to the vitamin-B12 independent methionine synthase family.</text>
</comment>
<accession>Q5HS05</accession>
<evidence type="ECO:0000255" key="1">
    <source>
        <dbReference type="HAMAP-Rule" id="MF_00172"/>
    </source>
</evidence>
<keyword id="KW-0028">Amino-acid biosynthesis</keyword>
<keyword id="KW-0479">Metal-binding</keyword>
<keyword id="KW-0486">Methionine biosynthesis</keyword>
<keyword id="KW-0489">Methyltransferase</keyword>
<keyword id="KW-1185">Reference proteome</keyword>
<keyword id="KW-0677">Repeat</keyword>
<keyword id="KW-0808">Transferase</keyword>
<keyword id="KW-0862">Zinc</keyword>
<proteinExistence type="inferred from homology"/>
<dbReference type="EC" id="2.1.1.14" evidence="1"/>
<dbReference type="EMBL" id="CP000029">
    <property type="protein sequence ID" value="AAW53410.1"/>
    <property type="molecule type" value="Genomic_DNA"/>
</dbReference>
<dbReference type="RefSeq" id="WP_002486187.1">
    <property type="nucleotide sequence ID" value="NC_002976.3"/>
</dbReference>
<dbReference type="SMR" id="Q5HS05"/>
<dbReference type="STRING" id="176279.SERP0034"/>
<dbReference type="KEGG" id="ser:SERP0034"/>
<dbReference type="eggNOG" id="COG0620">
    <property type="taxonomic scope" value="Bacteria"/>
</dbReference>
<dbReference type="HOGENOM" id="CLU_013175_0_0_9"/>
<dbReference type="UniPathway" id="UPA00051">
    <property type="reaction ID" value="UER00082"/>
</dbReference>
<dbReference type="Proteomes" id="UP000000531">
    <property type="component" value="Chromosome"/>
</dbReference>
<dbReference type="GO" id="GO:0003871">
    <property type="term" value="F:5-methyltetrahydropteroyltriglutamate-homocysteine S-methyltransferase activity"/>
    <property type="evidence" value="ECO:0007669"/>
    <property type="project" value="UniProtKB-UniRule"/>
</dbReference>
<dbReference type="GO" id="GO:0008270">
    <property type="term" value="F:zinc ion binding"/>
    <property type="evidence" value="ECO:0007669"/>
    <property type="project" value="InterPro"/>
</dbReference>
<dbReference type="GO" id="GO:0009086">
    <property type="term" value="P:methionine biosynthetic process"/>
    <property type="evidence" value="ECO:0007669"/>
    <property type="project" value="UniProtKB-UniRule"/>
</dbReference>
<dbReference type="GO" id="GO:0032259">
    <property type="term" value="P:methylation"/>
    <property type="evidence" value="ECO:0007669"/>
    <property type="project" value="UniProtKB-KW"/>
</dbReference>
<dbReference type="CDD" id="cd03311">
    <property type="entry name" value="CIMS_C_terminal_like"/>
    <property type="match status" value="1"/>
</dbReference>
<dbReference type="CDD" id="cd03312">
    <property type="entry name" value="CIMS_N_terminal_like"/>
    <property type="match status" value="1"/>
</dbReference>
<dbReference type="Gene3D" id="3.20.20.210">
    <property type="match status" value="2"/>
</dbReference>
<dbReference type="HAMAP" id="MF_00172">
    <property type="entry name" value="Meth_synth"/>
    <property type="match status" value="1"/>
</dbReference>
<dbReference type="InterPro" id="IPR013215">
    <property type="entry name" value="Cbl-indep_Met_Synth_N"/>
</dbReference>
<dbReference type="InterPro" id="IPR006276">
    <property type="entry name" value="Cobalamin-indep_Met_synthase"/>
</dbReference>
<dbReference type="InterPro" id="IPR002629">
    <property type="entry name" value="Met_Synth_C/arc"/>
</dbReference>
<dbReference type="InterPro" id="IPR038071">
    <property type="entry name" value="UROD/MetE-like_sf"/>
</dbReference>
<dbReference type="NCBIfam" id="TIGR01371">
    <property type="entry name" value="met_syn_B12ind"/>
    <property type="match status" value="1"/>
</dbReference>
<dbReference type="NCBIfam" id="NF003556">
    <property type="entry name" value="PRK05222.1"/>
    <property type="match status" value="1"/>
</dbReference>
<dbReference type="PANTHER" id="PTHR30519">
    <property type="entry name" value="5-METHYLTETRAHYDROPTEROYLTRIGLUTAMATE--HOMOCYSTEINE METHYLTRANSFERASE"/>
    <property type="match status" value="1"/>
</dbReference>
<dbReference type="Pfam" id="PF08267">
    <property type="entry name" value="Meth_synt_1"/>
    <property type="match status" value="1"/>
</dbReference>
<dbReference type="Pfam" id="PF01717">
    <property type="entry name" value="Meth_synt_2"/>
    <property type="match status" value="1"/>
</dbReference>
<dbReference type="PIRSF" id="PIRSF000382">
    <property type="entry name" value="MeTrfase_B12_ind"/>
    <property type="match status" value="1"/>
</dbReference>
<dbReference type="SUPFAM" id="SSF51726">
    <property type="entry name" value="UROD/MetE-like"/>
    <property type="match status" value="2"/>
</dbReference>
<name>METE_STAEQ</name>
<protein>
    <recommendedName>
        <fullName evidence="1">5-methyltetrahydropteroyltriglutamate--homocysteine methyltransferase</fullName>
        <ecNumber evidence="1">2.1.1.14</ecNumber>
    </recommendedName>
    <alternativeName>
        <fullName evidence="1">Cobalamin-independent methionine synthase</fullName>
    </alternativeName>
    <alternativeName>
        <fullName evidence="1">Methionine synthase, vitamin-B12 independent isozyme</fullName>
    </alternativeName>
</protein>